<keyword id="KW-0067">ATP-binding</keyword>
<keyword id="KW-0418">Kinase</keyword>
<keyword id="KW-0460">Magnesium</keyword>
<keyword id="KW-0479">Metal-binding</keyword>
<keyword id="KW-0547">Nucleotide-binding</keyword>
<keyword id="KW-0808">Transferase</keyword>
<feature type="chain" id="PRO_0000147045" description="Probable phosphoenolpyruvate synthase">
    <location>
        <begin position="1"/>
        <end position="821"/>
    </location>
</feature>
<feature type="active site" description="Tele-phosphohistidine intermediate" evidence="1">
    <location>
        <position position="444"/>
    </location>
</feature>
<feature type="active site" description="Proton donor" evidence="1">
    <location>
        <position position="759"/>
    </location>
</feature>
<feature type="binding site" evidence="1">
    <location>
        <position position="543"/>
    </location>
    <ligand>
        <name>substrate</name>
    </ligand>
</feature>
<feature type="binding site" evidence="1">
    <location>
        <position position="590"/>
    </location>
    <ligand>
        <name>substrate</name>
    </ligand>
</feature>
<feature type="binding site" evidence="1">
    <location>
        <position position="687"/>
    </location>
    <ligand>
        <name>Mg(2+)</name>
        <dbReference type="ChEBI" id="CHEBI:18420"/>
    </ligand>
</feature>
<feature type="binding site" evidence="1">
    <location>
        <position position="687"/>
    </location>
    <ligand>
        <name>substrate</name>
    </ligand>
</feature>
<feature type="binding site" evidence="1">
    <location>
        <position position="709"/>
    </location>
    <ligand>
        <name>substrate</name>
    </ligand>
</feature>
<feature type="binding site" evidence="1">
    <location>
        <position position="710"/>
    </location>
    <ligand>
        <name>substrate</name>
    </ligand>
</feature>
<feature type="binding site" evidence="1">
    <location>
        <position position="711"/>
    </location>
    <ligand>
        <name>substrate</name>
    </ligand>
</feature>
<feature type="binding site" evidence="1">
    <location>
        <position position="712"/>
    </location>
    <ligand>
        <name>Mg(2+)</name>
        <dbReference type="ChEBI" id="CHEBI:18420"/>
    </ligand>
</feature>
<feature type="binding site" evidence="1">
    <location>
        <position position="712"/>
    </location>
    <ligand>
        <name>substrate</name>
    </ligand>
</feature>
<evidence type="ECO:0000250" key="1"/>
<evidence type="ECO:0000305" key="2"/>
<protein>
    <recommendedName>
        <fullName>Probable phosphoenolpyruvate synthase</fullName>
        <shortName>PEP synthase</shortName>
        <ecNumber>2.7.9.2</ecNumber>
    </recommendedName>
    <alternativeName>
        <fullName>Pyruvate, water dikinase</fullName>
    </alternativeName>
</protein>
<dbReference type="EC" id="2.7.9.2"/>
<dbReference type="EMBL" id="BA000001">
    <property type="protein sequence ID" value="BAA29161.1"/>
    <property type="molecule type" value="Genomic_DNA"/>
</dbReference>
<dbReference type="PIR" id="B71229">
    <property type="entry name" value="B71229"/>
</dbReference>
<dbReference type="SMR" id="O57830"/>
<dbReference type="STRING" id="70601.gene:9377000"/>
<dbReference type="EnsemblBacteria" id="BAA29161">
    <property type="protein sequence ID" value="BAA29161"/>
    <property type="gene ID" value="BAA29161"/>
</dbReference>
<dbReference type="KEGG" id="pho:PH0092"/>
<dbReference type="eggNOG" id="arCOG01111">
    <property type="taxonomic scope" value="Archaea"/>
</dbReference>
<dbReference type="UniPathway" id="UPA00138"/>
<dbReference type="Proteomes" id="UP000000752">
    <property type="component" value="Chromosome"/>
</dbReference>
<dbReference type="GO" id="GO:0005524">
    <property type="term" value="F:ATP binding"/>
    <property type="evidence" value="ECO:0007669"/>
    <property type="project" value="UniProtKB-KW"/>
</dbReference>
<dbReference type="GO" id="GO:0046872">
    <property type="term" value="F:metal ion binding"/>
    <property type="evidence" value="ECO:0007669"/>
    <property type="project" value="UniProtKB-KW"/>
</dbReference>
<dbReference type="GO" id="GO:0008986">
    <property type="term" value="F:pyruvate, water dikinase activity"/>
    <property type="evidence" value="ECO:0007669"/>
    <property type="project" value="UniProtKB-EC"/>
</dbReference>
<dbReference type="GO" id="GO:0006094">
    <property type="term" value="P:gluconeogenesis"/>
    <property type="evidence" value="ECO:0007669"/>
    <property type="project" value="UniProtKB-UniPathway"/>
</dbReference>
<dbReference type="Gene3D" id="3.30.1490.20">
    <property type="entry name" value="ATP-grasp fold, A domain"/>
    <property type="match status" value="1"/>
</dbReference>
<dbReference type="Gene3D" id="3.30.470.20">
    <property type="entry name" value="ATP-grasp fold, B domain"/>
    <property type="match status" value="1"/>
</dbReference>
<dbReference type="Gene3D" id="3.20.20.60">
    <property type="entry name" value="Phosphoenolpyruvate-binding domains"/>
    <property type="match status" value="1"/>
</dbReference>
<dbReference type="Gene3D" id="3.50.30.10">
    <property type="entry name" value="Phosphohistidine domain"/>
    <property type="match status" value="1"/>
</dbReference>
<dbReference type="InterPro" id="IPR013815">
    <property type="entry name" value="ATP_grasp_subdomain_1"/>
</dbReference>
<dbReference type="InterPro" id="IPR008279">
    <property type="entry name" value="PEP-util_enz_mobile_dom"/>
</dbReference>
<dbReference type="InterPro" id="IPR006319">
    <property type="entry name" value="PEP_synth"/>
</dbReference>
<dbReference type="InterPro" id="IPR018274">
    <property type="entry name" value="PEP_util_AS"/>
</dbReference>
<dbReference type="InterPro" id="IPR000121">
    <property type="entry name" value="PEP_util_C"/>
</dbReference>
<dbReference type="InterPro" id="IPR023151">
    <property type="entry name" value="PEP_util_CS"/>
</dbReference>
<dbReference type="InterPro" id="IPR036637">
    <property type="entry name" value="Phosphohistidine_dom_sf"/>
</dbReference>
<dbReference type="InterPro" id="IPR002192">
    <property type="entry name" value="PPDK_AMP/ATP-bd"/>
</dbReference>
<dbReference type="InterPro" id="IPR015813">
    <property type="entry name" value="Pyrv/PenolPyrv_kinase-like_dom"/>
</dbReference>
<dbReference type="InterPro" id="IPR040442">
    <property type="entry name" value="Pyrv_kinase-like_dom_sf"/>
</dbReference>
<dbReference type="NCBIfam" id="TIGR01418">
    <property type="entry name" value="PEP_synth"/>
    <property type="match status" value="1"/>
</dbReference>
<dbReference type="NCBIfam" id="NF005057">
    <property type="entry name" value="PRK06464.1"/>
    <property type="match status" value="1"/>
</dbReference>
<dbReference type="PANTHER" id="PTHR43030">
    <property type="entry name" value="PHOSPHOENOLPYRUVATE SYNTHASE"/>
    <property type="match status" value="1"/>
</dbReference>
<dbReference type="PANTHER" id="PTHR43030:SF1">
    <property type="entry name" value="PHOSPHOENOLPYRUVATE SYNTHASE"/>
    <property type="match status" value="1"/>
</dbReference>
<dbReference type="Pfam" id="PF00391">
    <property type="entry name" value="PEP-utilizers"/>
    <property type="match status" value="1"/>
</dbReference>
<dbReference type="Pfam" id="PF02896">
    <property type="entry name" value="PEP-utilizers_C"/>
    <property type="match status" value="1"/>
</dbReference>
<dbReference type="Pfam" id="PF01326">
    <property type="entry name" value="PPDK_N"/>
    <property type="match status" value="1"/>
</dbReference>
<dbReference type="PIRSF" id="PIRSF000854">
    <property type="entry name" value="PEP_synthase"/>
    <property type="match status" value="1"/>
</dbReference>
<dbReference type="PRINTS" id="PR01736">
    <property type="entry name" value="PHPHTRNFRASE"/>
</dbReference>
<dbReference type="SUPFAM" id="SSF56059">
    <property type="entry name" value="Glutathione synthetase ATP-binding domain-like"/>
    <property type="match status" value="1"/>
</dbReference>
<dbReference type="SUPFAM" id="SSF51621">
    <property type="entry name" value="Phosphoenolpyruvate/pyruvate domain"/>
    <property type="match status" value="1"/>
</dbReference>
<dbReference type="SUPFAM" id="SSF52009">
    <property type="entry name" value="Phosphohistidine domain"/>
    <property type="match status" value="1"/>
</dbReference>
<dbReference type="PROSITE" id="PS00742">
    <property type="entry name" value="PEP_ENZYMES_2"/>
    <property type="match status" value="1"/>
</dbReference>
<dbReference type="PROSITE" id="PS00370">
    <property type="entry name" value="PEP_ENZYMES_PHOS_SITE"/>
    <property type="match status" value="1"/>
</dbReference>
<gene>
    <name type="primary">ppsA</name>
    <name type="ordered locus">PH0092</name>
</gene>
<accession>O57830</accession>
<sequence length="821" mass="90812">MDKMAYKFIKWFEELRKDDVPLVGGKGANLGEMTNAGIPVPPGFCVTAEAYKYFVENVKVSKEDVKKILGEKANKGTIAEVLASAPDEPRTLQEWIMDIINRTNVDDSKQLQENTAIIRELIESLEMPNEIADEIKQAYKELSQRFGKDEIYVAVRSSATAEDLPEASFAGQQETYLDVLGADDVIDKVKKCWASLWTARATFYRAKQGFDHSKVYLSAVVQKMVNSEKSGVMFTANPVTNNRNEIMINASWGLGEAVVSGAVTPDEYIVEKGTWKIKEKVIAKKEVMVIRNPETGKGTVQVKVAEYLGPEWVEKQVLTDEQIIEVAKMGQKIEEHYGWPQDIEWAYDKDDGKLYIVQSRPITTLKETTTEEVEEVEEAEVILKGLGASPGIGAGRVVVIFDASEIDKVKEGDVLVTTMTNPDMVPAMKRASAIITDEGGRTSHAAIVSRELGIPAVVGTKEATKKLKTGDYVTVDGTRGLVYKGIVKSLVEKKKKEEAAAAPGAAVAAAPLVTGTLVKVNVSMPEVAERAAATGADGVGLLRAEHMILSIGQHPVKFIKEGKEDELVERLAEGIEKVAAAFYPRPVWYRTLDAPTNEFREMPGGEDEPEERNPMLGWRGIRRGLDQPELLRAEFKAIKKVVEKGYNNIGVMLPLVSHPEQIRKAKEIAREVGLEPHKDVAWGIMIEVPAAAIIIEDLIKEGIDFVSFGTNDLTQYTLAIDRDNERVAKLYDETHPAVLKLIKHVIKVCKKYGVETSICGQAGSDPKMARILVRLGIDSISANPDAVQLIRQVVAQEERKLMLEAARKKLLEEEEEEEDLF</sequence>
<reference key="1">
    <citation type="journal article" date="1998" name="DNA Res.">
        <title>Complete sequence and gene organization of the genome of a hyper-thermophilic archaebacterium, Pyrococcus horikoshii OT3.</title>
        <authorList>
            <person name="Kawarabayasi Y."/>
            <person name="Sawada M."/>
            <person name="Horikawa H."/>
            <person name="Haikawa Y."/>
            <person name="Hino Y."/>
            <person name="Yamamoto S."/>
            <person name="Sekine M."/>
            <person name="Baba S."/>
            <person name="Kosugi H."/>
            <person name="Hosoyama A."/>
            <person name="Nagai Y."/>
            <person name="Sakai M."/>
            <person name="Ogura K."/>
            <person name="Otsuka R."/>
            <person name="Nakazawa H."/>
            <person name="Takamiya M."/>
            <person name="Ohfuku Y."/>
            <person name="Funahashi T."/>
            <person name="Tanaka T."/>
            <person name="Kudoh Y."/>
            <person name="Yamazaki J."/>
            <person name="Kushida N."/>
            <person name="Oguchi A."/>
            <person name="Aoki K."/>
            <person name="Yoshizawa T."/>
            <person name="Nakamura Y."/>
            <person name="Robb F.T."/>
            <person name="Horikoshi K."/>
            <person name="Masuchi Y."/>
            <person name="Shizuya H."/>
            <person name="Kikuchi H."/>
        </authorList>
    </citation>
    <scope>NUCLEOTIDE SEQUENCE [LARGE SCALE GENOMIC DNA]</scope>
    <source>
        <strain>ATCC 700860 / DSM 12428 / JCM 9974 / NBRC 100139 / OT-3</strain>
    </source>
</reference>
<name>PPSA_PYRHO</name>
<comment type="function">
    <text evidence="1">Catalyzes the phosphorylation of pyruvate to phosphoenolpyruvate.</text>
</comment>
<comment type="catalytic activity">
    <reaction>
        <text>pyruvate + ATP + H2O = phosphoenolpyruvate + AMP + phosphate + 2 H(+)</text>
        <dbReference type="Rhea" id="RHEA:11364"/>
        <dbReference type="ChEBI" id="CHEBI:15361"/>
        <dbReference type="ChEBI" id="CHEBI:15377"/>
        <dbReference type="ChEBI" id="CHEBI:15378"/>
        <dbReference type="ChEBI" id="CHEBI:30616"/>
        <dbReference type="ChEBI" id="CHEBI:43474"/>
        <dbReference type="ChEBI" id="CHEBI:58702"/>
        <dbReference type="ChEBI" id="CHEBI:456215"/>
        <dbReference type="EC" id="2.7.9.2"/>
    </reaction>
</comment>
<comment type="cofactor">
    <cofactor evidence="1">
        <name>Mg(2+)</name>
        <dbReference type="ChEBI" id="CHEBI:18420"/>
    </cofactor>
</comment>
<comment type="pathway">
    <text>Carbohydrate biosynthesis; gluconeogenesis.</text>
</comment>
<comment type="domain">
    <text evidence="1">The N-terminal domain contains the ATP/Pi binding site, the central domain the pyrophosphate/phosphate carrier histidine, and the C-terminal domain the pyruvate binding site.</text>
</comment>
<comment type="miscellaneous">
    <text evidence="1">The reaction takes place in three steps, mediated by a phosphocarrier histidine residue located on the surface of the central domain. The two first partial reactions are catalyzed at an active site located on the N-terminal domain, and the third partial reaction is catalyzed at an active site located on the C-terminal domain. For catalytic turnover, the central domain swivels from the concave surface of the N-terminal domain to that of the C-terminal domain (By similarity).</text>
</comment>
<comment type="similarity">
    <text evidence="2">Belongs to the PEP-utilizing enzyme family.</text>
</comment>
<organism>
    <name type="scientific">Pyrococcus horikoshii (strain ATCC 700860 / DSM 12428 / JCM 9974 / NBRC 100139 / OT-3)</name>
    <dbReference type="NCBI Taxonomy" id="70601"/>
    <lineage>
        <taxon>Archaea</taxon>
        <taxon>Methanobacteriati</taxon>
        <taxon>Methanobacteriota</taxon>
        <taxon>Thermococci</taxon>
        <taxon>Thermococcales</taxon>
        <taxon>Thermococcaceae</taxon>
        <taxon>Pyrococcus</taxon>
    </lineage>
</organism>
<proteinExistence type="inferred from homology"/>